<comment type="catalytic activity">
    <reaction evidence="1">
        <text>D-erythro-1-(imidazol-4-yl)glycerol 3-phosphate = 3-(imidazol-4-yl)-2-oxopropyl phosphate + H2O</text>
        <dbReference type="Rhea" id="RHEA:11040"/>
        <dbReference type="ChEBI" id="CHEBI:15377"/>
        <dbReference type="ChEBI" id="CHEBI:57766"/>
        <dbReference type="ChEBI" id="CHEBI:58278"/>
        <dbReference type="EC" id="4.2.1.19"/>
    </reaction>
</comment>
<comment type="pathway">
    <text evidence="1">Amino-acid biosynthesis; L-histidine biosynthesis; L-histidine from 5-phospho-alpha-D-ribose 1-diphosphate: step 6/9.</text>
</comment>
<comment type="subcellular location">
    <subcellularLocation>
        <location evidence="1">Cytoplasm</location>
    </subcellularLocation>
</comment>
<comment type="similarity">
    <text evidence="1">Belongs to the imidazoleglycerol-phosphate dehydratase family.</text>
</comment>
<name>HIS7_CLOB1</name>
<gene>
    <name evidence="1" type="primary">hisB</name>
    <name type="ordered locus">CLB_1588</name>
</gene>
<reference key="1">
    <citation type="journal article" date="2007" name="PLoS ONE">
        <title>Analysis of the neurotoxin complex genes in Clostridium botulinum A1-A4 and B1 strains: BoNT/A3, /Ba4 and /B1 clusters are located within plasmids.</title>
        <authorList>
            <person name="Smith T.J."/>
            <person name="Hill K.K."/>
            <person name="Foley B.T."/>
            <person name="Detter J.C."/>
            <person name="Munk A.C."/>
            <person name="Bruce D.C."/>
            <person name="Doggett N.A."/>
            <person name="Smith L.A."/>
            <person name="Marks J.D."/>
            <person name="Xie G."/>
            <person name="Brettin T.S."/>
        </authorList>
    </citation>
    <scope>NUCLEOTIDE SEQUENCE [LARGE SCALE GENOMIC DNA]</scope>
    <source>
        <strain>ATCC 19397 / Type A</strain>
    </source>
</reference>
<protein>
    <recommendedName>
        <fullName evidence="1">Imidazoleglycerol-phosphate dehydratase</fullName>
        <shortName evidence="1">IGPD</shortName>
        <ecNumber evidence="1">4.2.1.19</ecNumber>
    </recommendedName>
</protein>
<evidence type="ECO:0000255" key="1">
    <source>
        <dbReference type="HAMAP-Rule" id="MF_00076"/>
    </source>
</evidence>
<sequence>MKESIAKVYRKTGETEIKSEINLYGEGKYDIKTGIGFFDHMLNLMARHGLIDVKLEAKGDLQVDSHHTVEDVGIVLGESFKKALGDKKGIKRYGTSFVPMDEALASVSIDISGRPYIVCDFNFTVDKLGEMDTELVEEFLRALAFNAGITLHARVLYGKNNHHMIEAVFKALGRALREAVDRDEKINGVMSTKGTL</sequence>
<feature type="chain" id="PRO_1000010268" description="Imidazoleglycerol-phosphate dehydratase">
    <location>
        <begin position="1"/>
        <end position="196"/>
    </location>
</feature>
<proteinExistence type="inferred from homology"/>
<organism>
    <name type="scientific">Clostridium botulinum (strain ATCC 19397 / Type A)</name>
    <dbReference type="NCBI Taxonomy" id="441770"/>
    <lineage>
        <taxon>Bacteria</taxon>
        <taxon>Bacillati</taxon>
        <taxon>Bacillota</taxon>
        <taxon>Clostridia</taxon>
        <taxon>Eubacteriales</taxon>
        <taxon>Clostridiaceae</taxon>
        <taxon>Clostridium</taxon>
    </lineage>
</organism>
<dbReference type="EC" id="4.2.1.19" evidence="1"/>
<dbReference type="EMBL" id="CP000726">
    <property type="protein sequence ID" value="ABS35827.1"/>
    <property type="molecule type" value="Genomic_DNA"/>
</dbReference>
<dbReference type="RefSeq" id="WP_011949112.1">
    <property type="nucleotide sequence ID" value="NC_009697.1"/>
</dbReference>
<dbReference type="SMR" id="A7FU78"/>
<dbReference type="GeneID" id="5187720"/>
<dbReference type="KEGG" id="cba:CLB_1588"/>
<dbReference type="HOGENOM" id="CLU_044308_2_0_9"/>
<dbReference type="UniPathway" id="UPA00031">
    <property type="reaction ID" value="UER00011"/>
</dbReference>
<dbReference type="GO" id="GO:0005737">
    <property type="term" value="C:cytoplasm"/>
    <property type="evidence" value="ECO:0007669"/>
    <property type="project" value="UniProtKB-SubCell"/>
</dbReference>
<dbReference type="GO" id="GO:0004424">
    <property type="term" value="F:imidazoleglycerol-phosphate dehydratase activity"/>
    <property type="evidence" value="ECO:0007669"/>
    <property type="project" value="UniProtKB-UniRule"/>
</dbReference>
<dbReference type="GO" id="GO:0000105">
    <property type="term" value="P:L-histidine biosynthetic process"/>
    <property type="evidence" value="ECO:0007669"/>
    <property type="project" value="UniProtKB-UniRule"/>
</dbReference>
<dbReference type="CDD" id="cd07914">
    <property type="entry name" value="IGPD"/>
    <property type="match status" value="1"/>
</dbReference>
<dbReference type="FunFam" id="3.30.230.40:FF:000001">
    <property type="entry name" value="Imidazoleglycerol-phosphate dehydratase HisB"/>
    <property type="match status" value="1"/>
</dbReference>
<dbReference type="FunFam" id="3.30.230.40:FF:000003">
    <property type="entry name" value="Imidazoleglycerol-phosphate dehydratase HisB"/>
    <property type="match status" value="1"/>
</dbReference>
<dbReference type="Gene3D" id="3.30.230.40">
    <property type="entry name" value="Imidazole glycerol phosphate dehydratase, domain 1"/>
    <property type="match status" value="2"/>
</dbReference>
<dbReference type="HAMAP" id="MF_00076">
    <property type="entry name" value="HisB"/>
    <property type="match status" value="1"/>
</dbReference>
<dbReference type="InterPro" id="IPR038494">
    <property type="entry name" value="IGPD_sf"/>
</dbReference>
<dbReference type="InterPro" id="IPR000807">
    <property type="entry name" value="ImidazoleglycerolP_deHydtase"/>
</dbReference>
<dbReference type="InterPro" id="IPR020565">
    <property type="entry name" value="ImidazoleglycerP_deHydtase_CS"/>
</dbReference>
<dbReference type="InterPro" id="IPR020568">
    <property type="entry name" value="Ribosomal_Su5_D2-typ_SF"/>
</dbReference>
<dbReference type="NCBIfam" id="NF002107">
    <property type="entry name" value="PRK00951.1-2"/>
    <property type="match status" value="1"/>
</dbReference>
<dbReference type="NCBIfam" id="NF002109">
    <property type="entry name" value="PRK00951.1-5"/>
    <property type="match status" value="1"/>
</dbReference>
<dbReference type="NCBIfam" id="NF002111">
    <property type="entry name" value="PRK00951.2-1"/>
    <property type="match status" value="1"/>
</dbReference>
<dbReference type="NCBIfam" id="NF002112">
    <property type="entry name" value="PRK00951.2-2"/>
    <property type="match status" value="1"/>
</dbReference>
<dbReference type="NCBIfam" id="NF002114">
    <property type="entry name" value="PRK00951.2-4"/>
    <property type="match status" value="1"/>
</dbReference>
<dbReference type="NCBIfam" id="NF002116">
    <property type="entry name" value="PRK00951.2-6"/>
    <property type="match status" value="1"/>
</dbReference>
<dbReference type="PANTHER" id="PTHR23133:SF2">
    <property type="entry name" value="IMIDAZOLEGLYCEROL-PHOSPHATE DEHYDRATASE"/>
    <property type="match status" value="1"/>
</dbReference>
<dbReference type="PANTHER" id="PTHR23133">
    <property type="entry name" value="IMIDAZOLEGLYCEROL-PHOSPHATE DEHYDRATASE HIS7"/>
    <property type="match status" value="1"/>
</dbReference>
<dbReference type="Pfam" id="PF00475">
    <property type="entry name" value="IGPD"/>
    <property type="match status" value="1"/>
</dbReference>
<dbReference type="SUPFAM" id="SSF54211">
    <property type="entry name" value="Ribosomal protein S5 domain 2-like"/>
    <property type="match status" value="2"/>
</dbReference>
<dbReference type="PROSITE" id="PS00954">
    <property type="entry name" value="IGP_DEHYDRATASE_1"/>
    <property type="match status" value="1"/>
</dbReference>
<dbReference type="PROSITE" id="PS00955">
    <property type="entry name" value="IGP_DEHYDRATASE_2"/>
    <property type="match status" value="1"/>
</dbReference>
<keyword id="KW-0028">Amino-acid biosynthesis</keyword>
<keyword id="KW-0963">Cytoplasm</keyword>
<keyword id="KW-0368">Histidine biosynthesis</keyword>
<keyword id="KW-0456">Lyase</keyword>
<accession>A7FU78</accession>